<protein>
    <recommendedName>
        <fullName evidence="1">Aspartate 1-decarboxylase</fullName>
        <ecNumber evidence="1">4.1.1.11</ecNumber>
    </recommendedName>
    <alternativeName>
        <fullName evidence="1">Aspartate alpha-decarboxylase</fullName>
    </alternativeName>
    <component>
        <recommendedName>
            <fullName evidence="1">Aspartate 1-decarboxylase beta chain</fullName>
        </recommendedName>
    </component>
    <component>
        <recommendedName>
            <fullName evidence="1">Aspartate 1-decarboxylase alpha chain</fullName>
        </recommendedName>
    </component>
</protein>
<comment type="function">
    <text evidence="1">Catalyzes the pyruvoyl-dependent decarboxylation of aspartate to produce beta-alanine.</text>
</comment>
<comment type="catalytic activity">
    <reaction evidence="1">
        <text>L-aspartate + H(+) = beta-alanine + CO2</text>
        <dbReference type="Rhea" id="RHEA:19497"/>
        <dbReference type="ChEBI" id="CHEBI:15378"/>
        <dbReference type="ChEBI" id="CHEBI:16526"/>
        <dbReference type="ChEBI" id="CHEBI:29991"/>
        <dbReference type="ChEBI" id="CHEBI:57966"/>
        <dbReference type="EC" id="4.1.1.11"/>
    </reaction>
</comment>
<comment type="cofactor">
    <cofactor evidence="1">
        <name>pyruvate</name>
        <dbReference type="ChEBI" id="CHEBI:15361"/>
    </cofactor>
    <text evidence="1">Binds 1 pyruvoyl group covalently per subunit.</text>
</comment>
<comment type="pathway">
    <text evidence="1">Cofactor biosynthesis; (R)-pantothenate biosynthesis; beta-alanine from L-aspartate: step 1/1.</text>
</comment>
<comment type="subunit">
    <text evidence="1">Heterooctamer of four alpha and four beta subunits.</text>
</comment>
<comment type="subcellular location">
    <subcellularLocation>
        <location evidence="1">Cytoplasm</location>
    </subcellularLocation>
</comment>
<comment type="PTM">
    <text evidence="1">Is synthesized initially as an inactive proenzyme, which is activated by self-cleavage at a specific serine bond to produce a beta-subunit with a hydroxyl group at its C-terminus and an alpha-subunit with a pyruvoyl group at its N-terminus.</text>
</comment>
<comment type="similarity">
    <text evidence="1">Belongs to the PanD family.</text>
</comment>
<organism>
    <name type="scientific">Chlorobium phaeovibrioides (strain DSM 265 / 1930)</name>
    <name type="common">Prosthecochloris vibrioformis (strain DSM 265)</name>
    <dbReference type="NCBI Taxonomy" id="290318"/>
    <lineage>
        <taxon>Bacteria</taxon>
        <taxon>Pseudomonadati</taxon>
        <taxon>Chlorobiota</taxon>
        <taxon>Chlorobiia</taxon>
        <taxon>Chlorobiales</taxon>
        <taxon>Chlorobiaceae</taxon>
        <taxon>Chlorobium/Pelodictyon group</taxon>
        <taxon>Chlorobium</taxon>
    </lineage>
</organism>
<sequence length="128" mass="14326">MKLHLLKSKIHNAIVTSGDLEYEGSITVDSELLKKADMIPNEKVLVVNNNNGERFETYIIKGDHGSRVIQLNGAAARCALPGDEIIIMTFCEIEAEEAPDFKPMVLIVDKNNNPKRRHRIGEEDEQLG</sequence>
<reference key="1">
    <citation type="submission" date="2007-03" db="EMBL/GenBank/DDBJ databases">
        <title>Complete sequence of Prosthecochloris vibrioformis DSM 265.</title>
        <authorList>
            <consortium name="US DOE Joint Genome Institute"/>
            <person name="Copeland A."/>
            <person name="Lucas S."/>
            <person name="Lapidus A."/>
            <person name="Barry K."/>
            <person name="Detter J.C."/>
            <person name="Glavina del Rio T."/>
            <person name="Hammon N."/>
            <person name="Israni S."/>
            <person name="Pitluck S."/>
            <person name="Schmutz J."/>
            <person name="Larimer F."/>
            <person name="Land M."/>
            <person name="Hauser L."/>
            <person name="Mikhailova N."/>
            <person name="Li T."/>
            <person name="Overmann J."/>
            <person name="Schuster S.C."/>
            <person name="Bryant D.A."/>
            <person name="Richardson P."/>
        </authorList>
    </citation>
    <scope>NUCLEOTIDE SEQUENCE [LARGE SCALE GENOMIC DNA]</scope>
    <source>
        <strain>DSM 265 / 1930</strain>
    </source>
</reference>
<gene>
    <name evidence="1" type="primary">panD</name>
    <name type="ordered locus">Cvib_1551</name>
</gene>
<accession>A4SGF2</accession>
<proteinExistence type="inferred from homology"/>
<keyword id="KW-0068">Autocatalytic cleavage</keyword>
<keyword id="KW-0963">Cytoplasm</keyword>
<keyword id="KW-0210">Decarboxylase</keyword>
<keyword id="KW-0456">Lyase</keyword>
<keyword id="KW-0566">Pantothenate biosynthesis</keyword>
<keyword id="KW-0670">Pyruvate</keyword>
<keyword id="KW-0704">Schiff base</keyword>
<keyword id="KW-0865">Zymogen</keyword>
<evidence type="ECO:0000255" key="1">
    <source>
        <dbReference type="HAMAP-Rule" id="MF_00446"/>
    </source>
</evidence>
<feature type="chain" id="PRO_1000080932" description="Aspartate 1-decarboxylase beta chain" evidence="1">
    <location>
        <begin position="1"/>
        <end position="24"/>
    </location>
</feature>
<feature type="chain" id="PRO_1000080933" description="Aspartate 1-decarboxylase alpha chain" evidence="1">
    <location>
        <begin position="25"/>
        <end position="128"/>
    </location>
</feature>
<feature type="active site" description="Schiff-base intermediate with substrate; via pyruvic acid" evidence="1">
    <location>
        <position position="25"/>
    </location>
</feature>
<feature type="active site" description="Proton donor" evidence="1">
    <location>
        <position position="58"/>
    </location>
</feature>
<feature type="binding site" evidence="1">
    <location>
        <position position="57"/>
    </location>
    <ligand>
        <name>substrate</name>
    </ligand>
</feature>
<feature type="binding site" evidence="1">
    <location>
        <begin position="73"/>
        <end position="75"/>
    </location>
    <ligand>
        <name>substrate</name>
    </ligand>
</feature>
<feature type="modified residue" description="Pyruvic acid (Ser)" evidence="1">
    <location>
        <position position="25"/>
    </location>
</feature>
<dbReference type="EC" id="4.1.1.11" evidence="1"/>
<dbReference type="EMBL" id="CP000607">
    <property type="protein sequence ID" value="ABP37561.1"/>
    <property type="molecule type" value="Genomic_DNA"/>
</dbReference>
<dbReference type="SMR" id="A4SGF2"/>
<dbReference type="STRING" id="290318.Cvib_1551"/>
<dbReference type="KEGG" id="pvi:Cvib_1551"/>
<dbReference type="eggNOG" id="COG0853">
    <property type="taxonomic scope" value="Bacteria"/>
</dbReference>
<dbReference type="HOGENOM" id="CLU_115305_2_0_10"/>
<dbReference type="OrthoDB" id="9803983at2"/>
<dbReference type="UniPathway" id="UPA00028">
    <property type="reaction ID" value="UER00002"/>
</dbReference>
<dbReference type="GO" id="GO:0005829">
    <property type="term" value="C:cytosol"/>
    <property type="evidence" value="ECO:0007669"/>
    <property type="project" value="TreeGrafter"/>
</dbReference>
<dbReference type="GO" id="GO:0004068">
    <property type="term" value="F:aspartate 1-decarboxylase activity"/>
    <property type="evidence" value="ECO:0007669"/>
    <property type="project" value="UniProtKB-UniRule"/>
</dbReference>
<dbReference type="GO" id="GO:0006523">
    <property type="term" value="P:alanine biosynthetic process"/>
    <property type="evidence" value="ECO:0007669"/>
    <property type="project" value="InterPro"/>
</dbReference>
<dbReference type="GO" id="GO:0015940">
    <property type="term" value="P:pantothenate biosynthetic process"/>
    <property type="evidence" value="ECO:0007669"/>
    <property type="project" value="UniProtKB-UniRule"/>
</dbReference>
<dbReference type="CDD" id="cd06919">
    <property type="entry name" value="Asp_decarbox"/>
    <property type="match status" value="1"/>
</dbReference>
<dbReference type="Gene3D" id="2.40.40.20">
    <property type="match status" value="1"/>
</dbReference>
<dbReference type="HAMAP" id="MF_00446">
    <property type="entry name" value="PanD"/>
    <property type="match status" value="1"/>
</dbReference>
<dbReference type="InterPro" id="IPR009010">
    <property type="entry name" value="Asp_de-COase-like_dom_sf"/>
</dbReference>
<dbReference type="InterPro" id="IPR003190">
    <property type="entry name" value="Asp_decarbox"/>
</dbReference>
<dbReference type="NCBIfam" id="TIGR00223">
    <property type="entry name" value="panD"/>
    <property type="match status" value="1"/>
</dbReference>
<dbReference type="PANTHER" id="PTHR21012">
    <property type="entry name" value="ASPARTATE 1-DECARBOXYLASE"/>
    <property type="match status" value="1"/>
</dbReference>
<dbReference type="PANTHER" id="PTHR21012:SF0">
    <property type="entry name" value="ASPARTATE 1-DECARBOXYLASE"/>
    <property type="match status" value="1"/>
</dbReference>
<dbReference type="Pfam" id="PF02261">
    <property type="entry name" value="Asp_decarbox"/>
    <property type="match status" value="1"/>
</dbReference>
<dbReference type="PIRSF" id="PIRSF006246">
    <property type="entry name" value="Asp_decarbox"/>
    <property type="match status" value="1"/>
</dbReference>
<dbReference type="SUPFAM" id="SSF50692">
    <property type="entry name" value="ADC-like"/>
    <property type="match status" value="1"/>
</dbReference>
<name>PAND_CHLPM</name>